<protein>
    <recommendedName>
        <fullName>Neuraminyllactose-binding hemagglutinin</fullName>
    </recommendedName>
    <alternativeName>
        <fullName>Flagellar sheath adhesin</fullName>
    </alternativeName>
    <alternativeName>
        <fullName>N-acetylneuraminyllactose-binding fibrillar hemagglutinin receptor-binding subunit</fullName>
        <shortName>NLBH</shortName>
    </alternativeName>
</protein>
<proteinExistence type="inferred from homology"/>
<dbReference type="EMBL" id="AE001439">
    <property type="protein sequence ID" value="AAD06306.1"/>
    <property type="molecule type" value="Genomic_DNA"/>
</dbReference>
<dbReference type="PIR" id="C71896">
    <property type="entry name" value="C71896"/>
</dbReference>
<dbReference type="RefSeq" id="WP_000855917.1">
    <property type="nucleotide sequence ID" value="NC_000921.1"/>
</dbReference>
<dbReference type="SMR" id="Q9ZL47"/>
<dbReference type="KEGG" id="hpj:jhp_0733"/>
<dbReference type="PATRIC" id="fig|85963.30.peg.243"/>
<dbReference type="Proteomes" id="UP000000804">
    <property type="component" value="Chromosome"/>
</dbReference>
<dbReference type="GO" id="GO:0009279">
    <property type="term" value="C:cell outer membrane"/>
    <property type="evidence" value="ECO:0007669"/>
    <property type="project" value="UniProtKB-SubCell"/>
</dbReference>
<dbReference type="Gene3D" id="3.30.160.180">
    <property type="entry name" value="Putative neuraminyllactose-binding hemagglutinin homolog like domain"/>
    <property type="match status" value="1"/>
</dbReference>
<dbReference type="InterPro" id="IPR007876">
    <property type="entry name" value="NeuraminylLac-bd_hemagglutn"/>
</dbReference>
<dbReference type="InterPro" id="IPR038531">
    <property type="entry name" value="NeuraminylLac-bd_hemagglutn_sf"/>
</dbReference>
<dbReference type="Pfam" id="PF05211">
    <property type="entry name" value="NLBH"/>
    <property type="match status" value="1"/>
</dbReference>
<dbReference type="PIRSF" id="PIRSF019714">
    <property type="entry name" value="Neuraminyllac-bd_haemagglutn"/>
    <property type="match status" value="1"/>
</dbReference>
<dbReference type="SUPFAM" id="SSF159594">
    <property type="entry name" value="XCC0632-like"/>
    <property type="match status" value="1"/>
</dbReference>
<dbReference type="PROSITE" id="PS51257">
    <property type="entry name" value="PROKAR_LIPOPROTEIN"/>
    <property type="match status" value="1"/>
</dbReference>
<name>HPAA_HELPJ</name>
<accession>Q9ZL47</accession>
<evidence type="ECO:0000255" key="1">
    <source>
        <dbReference type="PROSITE-ProRule" id="PRU00303"/>
    </source>
</evidence>
<evidence type="ECO:0000305" key="2"/>
<comment type="subcellular location">
    <subcellularLocation>
        <location evidence="2">Cell outer membrane</location>
        <topology evidence="2">Lipid-anchor</topology>
    </subcellularLocation>
</comment>
<organism>
    <name type="scientific">Helicobacter pylori (strain J99 / ATCC 700824)</name>
    <name type="common">Campylobacter pylori J99</name>
    <dbReference type="NCBI Taxonomy" id="85963"/>
    <lineage>
        <taxon>Bacteria</taxon>
        <taxon>Pseudomonadati</taxon>
        <taxon>Campylobacterota</taxon>
        <taxon>Epsilonproteobacteria</taxon>
        <taxon>Campylobacterales</taxon>
        <taxon>Helicobacteraceae</taxon>
        <taxon>Helicobacter</taxon>
    </lineage>
</organism>
<reference key="1">
    <citation type="journal article" date="1999" name="Nature">
        <title>Genomic sequence comparison of two unrelated isolates of the human gastric pathogen Helicobacter pylori.</title>
        <authorList>
            <person name="Alm R.A."/>
            <person name="Ling L.-S.L."/>
            <person name="Moir D.T."/>
            <person name="King B.L."/>
            <person name="Brown E.D."/>
            <person name="Doig P.C."/>
            <person name="Smith D.R."/>
            <person name="Noonan B."/>
            <person name="Guild B.C."/>
            <person name="deJonge B.L."/>
            <person name="Carmel G."/>
            <person name="Tummino P.J."/>
            <person name="Caruso A."/>
            <person name="Uria-Nickelsen M."/>
            <person name="Mills D.M."/>
            <person name="Ives C."/>
            <person name="Gibson R."/>
            <person name="Merberg D."/>
            <person name="Mills S.D."/>
            <person name="Jiang Q."/>
            <person name="Taylor D.E."/>
            <person name="Vovis G.F."/>
            <person name="Trust T.J."/>
        </authorList>
    </citation>
    <scope>NUCLEOTIDE SEQUENCE [LARGE SCALE GENOMIC DNA]</scope>
    <source>
        <strain>J99 / ATCC 700824</strain>
    </source>
</reference>
<gene>
    <name type="primary">hpaA</name>
    <name type="ordered locus">jhp_0733</name>
</gene>
<feature type="signal peptide" evidence="1">
    <location>
        <begin position="1"/>
        <end position="27"/>
    </location>
</feature>
<feature type="chain" id="PRO_0000018104" description="Neuraminyllactose-binding hemagglutinin">
    <location>
        <begin position="28"/>
        <end position="260"/>
    </location>
</feature>
<feature type="lipid moiety-binding region" description="N-palmitoyl cysteine" evidence="2">
    <location>
        <position position="28"/>
    </location>
</feature>
<feature type="lipid moiety-binding region" description="S-diacylglycerol cysteine" evidence="2">
    <location>
        <position position="28"/>
    </location>
</feature>
<sequence length="260" mass="29200">MKTNGHFKDFAWKKCFLGASVVALLVGCSPHIIETNEVALKLNYHPASEKVQALDEKILLLRPAFQYSDNIAKEYENKFKNQTTLKVEEILQNQGYKVINVDSSDKDDFSFAQKKEGYLAVAMNGEIVLRPDPKRTIQKKSEPGLLFSTGLDKMEGVLIPAGFVKVTILEPMSGESLDSFTMDLSELDIQEKFLKTTHSSHSGGLVSTMVKGTDNSNDAIKSALNKIFASIMQEMDKKLTQRNLESYQKDAKELKNKRNR</sequence>
<keyword id="KW-0998">Cell outer membrane</keyword>
<keyword id="KW-0449">Lipoprotein</keyword>
<keyword id="KW-0472">Membrane</keyword>
<keyword id="KW-0564">Palmitate</keyword>
<keyword id="KW-0732">Signal</keyword>